<accession>Q8DWK8</accession>
<feature type="chain" id="PRO_0000192133" description="Bifunctional purine biosynthesis protein PurH">
    <location>
        <begin position="1"/>
        <end position="515"/>
    </location>
</feature>
<feature type="domain" description="MGS-like" evidence="2">
    <location>
        <begin position="1"/>
        <end position="145"/>
    </location>
</feature>
<comment type="catalytic activity">
    <reaction evidence="1">
        <text>(6R)-10-formyltetrahydrofolate + 5-amino-1-(5-phospho-beta-D-ribosyl)imidazole-4-carboxamide = 5-formamido-1-(5-phospho-D-ribosyl)imidazole-4-carboxamide + (6S)-5,6,7,8-tetrahydrofolate</text>
        <dbReference type="Rhea" id="RHEA:22192"/>
        <dbReference type="ChEBI" id="CHEBI:57453"/>
        <dbReference type="ChEBI" id="CHEBI:58467"/>
        <dbReference type="ChEBI" id="CHEBI:58475"/>
        <dbReference type="ChEBI" id="CHEBI:195366"/>
        <dbReference type="EC" id="2.1.2.3"/>
    </reaction>
</comment>
<comment type="catalytic activity">
    <reaction evidence="1">
        <text>IMP + H2O = 5-formamido-1-(5-phospho-D-ribosyl)imidazole-4-carboxamide</text>
        <dbReference type="Rhea" id="RHEA:18445"/>
        <dbReference type="ChEBI" id="CHEBI:15377"/>
        <dbReference type="ChEBI" id="CHEBI:58053"/>
        <dbReference type="ChEBI" id="CHEBI:58467"/>
        <dbReference type="EC" id="3.5.4.10"/>
    </reaction>
</comment>
<comment type="pathway">
    <text evidence="1">Purine metabolism; IMP biosynthesis via de novo pathway; 5-formamido-1-(5-phospho-D-ribosyl)imidazole-4-carboxamide from 5-amino-1-(5-phospho-D-ribosyl)imidazole-4-carboxamide (10-formyl THF route): step 1/1.</text>
</comment>
<comment type="pathway">
    <text evidence="1">Purine metabolism; IMP biosynthesis via de novo pathway; IMP from 5-formamido-1-(5-phospho-D-ribosyl)imidazole-4-carboxamide: step 1/1.</text>
</comment>
<comment type="domain">
    <text evidence="1">The IMP cyclohydrolase activity resides in the N-terminal region.</text>
</comment>
<comment type="similarity">
    <text evidence="1">Belongs to the PurH family.</text>
</comment>
<comment type="sequence caution" evidence="3">
    <conflict type="erroneous initiation">
        <sequence resource="EMBL-CDS" id="AAN57826"/>
    </conflict>
</comment>
<protein>
    <recommendedName>
        <fullName evidence="1">Bifunctional purine biosynthesis protein PurH</fullName>
    </recommendedName>
    <domain>
        <recommendedName>
            <fullName evidence="1">Phosphoribosylaminoimidazolecarboxamide formyltransferase</fullName>
            <ecNumber evidence="1">2.1.2.3</ecNumber>
        </recommendedName>
        <alternativeName>
            <fullName evidence="1">AICAR transformylase</fullName>
        </alternativeName>
    </domain>
    <domain>
        <recommendedName>
            <fullName evidence="1">IMP cyclohydrolase</fullName>
            <ecNumber evidence="1">3.5.4.10</ecNumber>
        </recommendedName>
        <alternativeName>
            <fullName evidence="1">ATIC</fullName>
        </alternativeName>
        <alternativeName>
            <fullName evidence="1">IMP synthase</fullName>
        </alternativeName>
        <alternativeName>
            <fullName evidence="1">Inosinicase</fullName>
        </alternativeName>
    </domain>
</protein>
<reference key="1">
    <citation type="journal article" date="2002" name="Proc. Natl. Acad. Sci. U.S.A.">
        <title>Genome sequence of Streptococcus mutans UA159, a cariogenic dental pathogen.</title>
        <authorList>
            <person name="Ajdic D.J."/>
            <person name="McShan W.M."/>
            <person name="McLaughlin R.E."/>
            <person name="Savic G."/>
            <person name="Chang J."/>
            <person name="Carson M.B."/>
            <person name="Primeaux C."/>
            <person name="Tian R."/>
            <person name="Kenton S."/>
            <person name="Jia H.G."/>
            <person name="Lin S.P."/>
            <person name="Qian Y."/>
            <person name="Li S."/>
            <person name="Zhu H."/>
            <person name="Najar F.Z."/>
            <person name="Lai H."/>
            <person name="White J."/>
            <person name="Roe B.A."/>
            <person name="Ferretti J.J."/>
        </authorList>
    </citation>
    <scope>NUCLEOTIDE SEQUENCE [LARGE SCALE GENOMIC DNA]</scope>
    <source>
        <strain>ATCC 700610 / UA159</strain>
    </source>
</reference>
<dbReference type="EC" id="2.1.2.3" evidence="1"/>
<dbReference type="EC" id="3.5.4.10" evidence="1"/>
<dbReference type="EMBL" id="AE014133">
    <property type="protein sequence ID" value="AAN57826.1"/>
    <property type="status" value="ALT_INIT"/>
    <property type="molecule type" value="Genomic_DNA"/>
</dbReference>
<dbReference type="RefSeq" id="NP_720520.1">
    <property type="nucleotide sequence ID" value="NC_004350.2"/>
</dbReference>
<dbReference type="RefSeq" id="WP_002309883.1">
    <property type="nucleotide sequence ID" value="NC_004350.2"/>
</dbReference>
<dbReference type="SMR" id="Q8DWK8"/>
<dbReference type="STRING" id="210007.SMU_37"/>
<dbReference type="KEGG" id="smu:SMU_37"/>
<dbReference type="PATRIC" id="fig|210007.7.peg.32"/>
<dbReference type="eggNOG" id="COG0138">
    <property type="taxonomic scope" value="Bacteria"/>
</dbReference>
<dbReference type="HOGENOM" id="CLU_016316_5_2_9"/>
<dbReference type="OrthoDB" id="9802065at2"/>
<dbReference type="UniPathway" id="UPA00074">
    <property type="reaction ID" value="UER00133"/>
</dbReference>
<dbReference type="UniPathway" id="UPA00074">
    <property type="reaction ID" value="UER00135"/>
</dbReference>
<dbReference type="Proteomes" id="UP000002512">
    <property type="component" value="Chromosome"/>
</dbReference>
<dbReference type="GO" id="GO:0005829">
    <property type="term" value="C:cytosol"/>
    <property type="evidence" value="ECO:0007669"/>
    <property type="project" value="TreeGrafter"/>
</dbReference>
<dbReference type="GO" id="GO:0003937">
    <property type="term" value="F:IMP cyclohydrolase activity"/>
    <property type="evidence" value="ECO:0007669"/>
    <property type="project" value="UniProtKB-UniRule"/>
</dbReference>
<dbReference type="GO" id="GO:0004643">
    <property type="term" value="F:phosphoribosylaminoimidazolecarboxamide formyltransferase activity"/>
    <property type="evidence" value="ECO:0007669"/>
    <property type="project" value="UniProtKB-UniRule"/>
</dbReference>
<dbReference type="GO" id="GO:0006189">
    <property type="term" value="P:'de novo' IMP biosynthetic process"/>
    <property type="evidence" value="ECO:0007669"/>
    <property type="project" value="UniProtKB-UniRule"/>
</dbReference>
<dbReference type="CDD" id="cd01421">
    <property type="entry name" value="IMPCH"/>
    <property type="match status" value="1"/>
</dbReference>
<dbReference type="FunFam" id="3.40.140.20:FF:000001">
    <property type="entry name" value="Bifunctional purine biosynthesis protein PurH"/>
    <property type="match status" value="1"/>
</dbReference>
<dbReference type="FunFam" id="3.40.140.20:FF:000002">
    <property type="entry name" value="Bifunctional purine biosynthesis protein PurH"/>
    <property type="match status" value="1"/>
</dbReference>
<dbReference type="FunFam" id="3.40.50.1380:FF:000001">
    <property type="entry name" value="Bifunctional purine biosynthesis protein PurH"/>
    <property type="match status" value="1"/>
</dbReference>
<dbReference type="Gene3D" id="3.40.140.20">
    <property type="match status" value="2"/>
</dbReference>
<dbReference type="Gene3D" id="3.40.50.1380">
    <property type="entry name" value="Methylglyoxal synthase-like domain"/>
    <property type="match status" value="1"/>
</dbReference>
<dbReference type="HAMAP" id="MF_00139">
    <property type="entry name" value="PurH"/>
    <property type="match status" value="1"/>
</dbReference>
<dbReference type="InterPro" id="IPR024051">
    <property type="entry name" value="AICAR_Tfase_dup_dom_sf"/>
</dbReference>
<dbReference type="InterPro" id="IPR016193">
    <property type="entry name" value="Cytidine_deaminase-like"/>
</dbReference>
<dbReference type="InterPro" id="IPR011607">
    <property type="entry name" value="MGS-like_dom"/>
</dbReference>
<dbReference type="InterPro" id="IPR036914">
    <property type="entry name" value="MGS-like_dom_sf"/>
</dbReference>
<dbReference type="InterPro" id="IPR002695">
    <property type="entry name" value="PurH-like"/>
</dbReference>
<dbReference type="NCBIfam" id="NF002049">
    <property type="entry name" value="PRK00881.1"/>
    <property type="match status" value="1"/>
</dbReference>
<dbReference type="NCBIfam" id="TIGR00355">
    <property type="entry name" value="purH"/>
    <property type="match status" value="1"/>
</dbReference>
<dbReference type="PANTHER" id="PTHR11692:SF0">
    <property type="entry name" value="BIFUNCTIONAL PURINE BIOSYNTHESIS PROTEIN ATIC"/>
    <property type="match status" value="1"/>
</dbReference>
<dbReference type="PANTHER" id="PTHR11692">
    <property type="entry name" value="BIFUNCTIONAL PURINE BIOSYNTHESIS PROTEIN PURH"/>
    <property type="match status" value="1"/>
</dbReference>
<dbReference type="Pfam" id="PF01808">
    <property type="entry name" value="AICARFT_IMPCHas"/>
    <property type="match status" value="1"/>
</dbReference>
<dbReference type="Pfam" id="PF02142">
    <property type="entry name" value="MGS"/>
    <property type="match status" value="1"/>
</dbReference>
<dbReference type="PIRSF" id="PIRSF000414">
    <property type="entry name" value="AICARFT_IMPCHas"/>
    <property type="match status" value="1"/>
</dbReference>
<dbReference type="SMART" id="SM00798">
    <property type="entry name" value="AICARFT_IMPCHas"/>
    <property type="match status" value="1"/>
</dbReference>
<dbReference type="SMART" id="SM00851">
    <property type="entry name" value="MGS"/>
    <property type="match status" value="1"/>
</dbReference>
<dbReference type="SUPFAM" id="SSF53927">
    <property type="entry name" value="Cytidine deaminase-like"/>
    <property type="match status" value="1"/>
</dbReference>
<dbReference type="SUPFAM" id="SSF52335">
    <property type="entry name" value="Methylglyoxal synthase-like"/>
    <property type="match status" value="1"/>
</dbReference>
<dbReference type="PROSITE" id="PS51855">
    <property type="entry name" value="MGS"/>
    <property type="match status" value="1"/>
</dbReference>
<proteinExistence type="inferred from homology"/>
<keyword id="KW-0378">Hydrolase</keyword>
<keyword id="KW-0511">Multifunctional enzyme</keyword>
<keyword id="KW-0658">Purine biosynthesis</keyword>
<keyword id="KW-1185">Reference proteome</keyword>
<keyword id="KW-0808">Transferase</keyword>
<sequence length="515" mass="56467">MTKRALISVSDKSGIVDFAQELKNLGWEIVSTGGTKVALDKAGIDTIAIDDVTGFPEMMDGRVKTLHPNIHGGLLARRDLDSHVNAMKEHEITPIDLVVVNLYPFKETILKPDATYADAVENIDIGGPSMLRSAAKNHASVTVVVDPADYAEILDELSANGETSFETRKRLAAKVFRHTAAYDALIAEYFTAQVGEEKPEKLTLTYDLKQPMRYGENPQQNADFYQKALPTAYSIASAQQLNGKELSFNNIRDADAAIRVIRDFKDRPTVVALKHMNPCGIGQADDIETAWDYAYEADLVSIFGGIVVLNREVDAATAEKMHAIFLEIIIAPSYTDEALAILTTKKKNLRILQLPFDAQEASEAEKEYTGVVGGLLVQNQDVVKESPADWQVVTKRQPTKTEETALEFAWKAIKYVKSNGIIVTNDHMTLGVGPGQTNRVASVRIAIDQAKDRLDGAVLASDAFFPFADNVEEIAAAGIKAIIQPGGSVRDQESIDMADKYGIAMVFTGVRHFRH</sequence>
<gene>
    <name evidence="1" type="primary">purH</name>
    <name type="ordered locus">SMU_37</name>
</gene>
<evidence type="ECO:0000255" key="1">
    <source>
        <dbReference type="HAMAP-Rule" id="MF_00139"/>
    </source>
</evidence>
<evidence type="ECO:0000255" key="2">
    <source>
        <dbReference type="PROSITE-ProRule" id="PRU01202"/>
    </source>
</evidence>
<evidence type="ECO:0000305" key="3"/>
<name>PUR9_STRMU</name>
<organism>
    <name type="scientific">Streptococcus mutans serotype c (strain ATCC 700610 / UA159)</name>
    <dbReference type="NCBI Taxonomy" id="210007"/>
    <lineage>
        <taxon>Bacteria</taxon>
        <taxon>Bacillati</taxon>
        <taxon>Bacillota</taxon>
        <taxon>Bacilli</taxon>
        <taxon>Lactobacillales</taxon>
        <taxon>Streptococcaceae</taxon>
        <taxon>Streptococcus</taxon>
    </lineage>
</organism>